<comment type="function">
    <text evidence="1 5 6 7 8 9">Key component of the ribosome quality control complex (RQC), a ribosome-associated complex that mediates the extraction of incompletely synthesized nascent chains from stalled ribosomes as well as their ubiquitin-mediated proteasomal degradation (By similarity). Thereby, frees 60S subunit ribosomes from the stalled translation complex and prevents the accumulation of nascent polypeptide chains that are potentially toxic for the cell (By similarity). Within the RQC complex, Clbn/NEMF specifically binds stalled 60S ribosomal subunits by recognizing an exposed, nascent chain-conjugated tRNA moiety (PubMed:31378462). Following binding to stalled 60S ribosomal subunits, Clbn/NEMF mediates CAT tailing by recruiting alanine-charged tRNA to the A-site and directing the elongation of stalled nascent chains independently of mRNA or 40S subunits, leading to non-templated C-terminal alanine extensions (CAT tails) (By similarity). On mitochondrial surface, plays a role in mitochondrial-stress induced translational termination impairment and protein carboxyl terminal extension (MISTERMINATE) (PubMed:31378462). Plays a role in regulating nuclear transport possibly through directly binding to both emb and cargo proteins (PubMed:16103875). Plays a role in the regulation of G1-to-S cell cycle transition (PubMed:30231800). Regulates S phase checkpoint by antagonizing E2F1 activity (PubMed:30231800). Together with hid and tefu/ATM, plays a role in DNA damage-induced apoptosis through both p53-dependent and -independent activity (PubMed:22964637). Plays an essential role in the regulation of mitochondrial structure and redox state in enterocytes which is essential for the control of intestinal stem cells proliferation and intestinal homeostasis (PubMed:33057338).</text>
</comment>
<comment type="subunit">
    <text evidence="1 2 5">Component of the ribosome quality control complex (RQC), composed of at least the E3 ubiquitin ligase l(3)76BDr/LTN1 and Clbn/NEMF associated with the 60S ribosomal subunit. The complex probably also contains TCF25 as well as TER94/VCP and its ubiquitin-binding cofactors (By similarity). Interacts (via its C-terminus) with pros (via its homeobox) (PubMed:16103875). Interacts (via its N-terminus) with emb (PubMed:16103875).</text>
</comment>
<comment type="subcellular location">
    <subcellularLocation>
        <location evidence="11">Nucleus</location>
    </subcellularLocation>
    <subcellularLocation>
        <location evidence="9">Cytoplasm</location>
    </subcellularLocation>
    <subcellularLocation>
        <location evidence="9">Mitochondrion outer membrane</location>
        <topology evidence="11">Peripheral membrane protein</topology>
        <orientation evidence="11">Cytoplasmic side</orientation>
    </subcellularLocation>
</comment>
<comment type="tissue specificity">
    <text evidence="9">Expressed in enterocytes (at protein level).</text>
</comment>
<comment type="developmental stage">
    <text evidence="5">Expressed ubiquitously throughout embryonic development.</text>
</comment>
<comment type="induction">
    <text evidence="6 7">Up-regulated in response to DNA-damage induced by ionizing radiation.</text>
</comment>
<comment type="domain">
    <text evidence="5">The N-terminal domain contains a nuclear export signal. The C-terminal domain may interact with cargo proteins.</text>
</comment>
<comment type="disruption phenotype">
    <text evidence="5 6 7 8 9">Mutant flies are viable and fertile (PubMed:16103875). Shows small, developmental delays and shortened lifespans (PubMed:22964637, PubMed:33057338). Shows dysfunctional intestinal barrier with increased number of intestinal stem cells (ISC) and enteroblasts (EB) (PubMed:33057338). Results in enterocytes (EC) with fragmented mitochondria and defective depolarization (PubMed:33057338). Results in aberrant activation of JAK-STAT signaling pathway (PubMed:33057338). Shows hypersensitization to ionizing irradiation with melanotic masses, defective S phase checkpoint and decreased cell death by apoptosis (PubMed:22964637, PubMed:30231800). In neuroblasts, pros protein does not show relocalization to the nucleus (PubMed:16103875). After ionizing irradiation, simultaneous knockout of Clbn/NEMF and p53 shows similar number of DNA breaks per nucleus but absence of irradiation-induced cell death compared to single knockout (PubMed:22964637). Simultaneous knockout of Clbn/NEMF and hid has similar disregulation of apoptosis to single mutants upon ionizing irradiation (PubMed:22964637). Simultaneous knockout Clbn/NEMF and tefu increases the formation of spontaneous tumors (PubMed:22964637). Simultaneous knockout of Clbn and Pink1 rescues ATP levels, wing posture defects and impaired neuronal numbers observed in Pink1 single mutants (PubMed:31378462). RNAi-mediated knockdown results in reduced lifespan (PubMed:33057338). RNAi-mediated knockdown in EC results in increased number of progenitor cells and EE cells (PubMed:33057338). RNAi-mediated knockdown in ISC and EB, or EE cells, has no significant effect on the number of ISC, EB and EE cells (PubMed:33057338). RNAi-mediated knockdown in the smooth muscle surrounding the gut has no effect on the number of ISC, EB and EE cells (PubMed:33057338). Simultaneous RNAi-mediated knockdown of Clbn and Pink1 rescues muscular and mitochondrial morphology defects present in Pink1 knockdown single mutants (PubMed:31378462).</text>
</comment>
<comment type="similarity">
    <text evidence="5">Belongs to the NEMF family.</text>
</comment>
<keyword id="KW-0175">Coiled coil</keyword>
<keyword id="KW-0963">Cytoplasm</keyword>
<keyword id="KW-0472">Membrane</keyword>
<keyword id="KW-0496">Mitochondrion</keyword>
<keyword id="KW-1000">Mitochondrion outer membrane</keyword>
<keyword id="KW-0539">Nucleus</keyword>
<keyword id="KW-1185">Reference proteome</keyword>
<name>NEMF_DROME</name>
<organism>
    <name type="scientific">Drosophila melanogaster</name>
    <name type="common">Fruit fly</name>
    <dbReference type="NCBI Taxonomy" id="7227"/>
    <lineage>
        <taxon>Eukaryota</taxon>
        <taxon>Metazoa</taxon>
        <taxon>Ecdysozoa</taxon>
        <taxon>Arthropoda</taxon>
        <taxon>Hexapoda</taxon>
        <taxon>Insecta</taxon>
        <taxon>Pterygota</taxon>
        <taxon>Neoptera</taxon>
        <taxon>Endopterygota</taxon>
        <taxon>Diptera</taxon>
        <taxon>Brachycera</taxon>
        <taxon>Muscomorpha</taxon>
        <taxon>Ephydroidea</taxon>
        <taxon>Drosophilidae</taxon>
        <taxon>Drosophila</taxon>
        <taxon>Sophophora</taxon>
    </lineage>
</organism>
<proteinExistence type="evidence at protein level"/>
<reference evidence="12" key="1">
    <citation type="journal article" date="2000" name="Science">
        <title>The genome sequence of Drosophila melanogaster.</title>
        <authorList>
            <person name="Adams M.D."/>
            <person name="Celniker S.E."/>
            <person name="Holt R.A."/>
            <person name="Evans C.A."/>
            <person name="Gocayne J.D."/>
            <person name="Amanatides P.G."/>
            <person name="Scherer S.E."/>
            <person name="Li P.W."/>
            <person name="Hoskins R.A."/>
            <person name="Galle R.F."/>
            <person name="George R.A."/>
            <person name="Lewis S.E."/>
            <person name="Richards S."/>
            <person name="Ashburner M."/>
            <person name="Henderson S.N."/>
            <person name="Sutton G.G."/>
            <person name="Wortman J.R."/>
            <person name="Yandell M.D."/>
            <person name="Zhang Q."/>
            <person name="Chen L.X."/>
            <person name="Brandon R.C."/>
            <person name="Rogers Y.-H.C."/>
            <person name="Blazej R.G."/>
            <person name="Champe M."/>
            <person name="Pfeiffer B.D."/>
            <person name="Wan K.H."/>
            <person name="Doyle C."/>
            <person name="Baxter E.G."/>
            <person name="Helt G."/>
            <person name="Nelson C.R."/>
            <person name="Miklos G.L.G."/>
            <person name="Abril J.F."/>
            <person name="Agbayani A."/>
            <person name="An H.-J."/>
            <person name="Andrews-Pfannkoch C."/>
            <person name="Baldwin D."/>
            <person name="Ballew R.M."/>
            <person name="Basu A."/>
            <person name="Baxendale J."/>
            <person name="Bayraktaroglu L."/>
            <person name="Beasley E.M."/>
            <person name="Beeson K.Y."/>
            <person name="Benos P.V."/>
            <person name="Berman B.P."/>
            <person name="Bhandari D."/>
            <person name="Bolshakov S."/>
            <person name="Borkova D."/>
            <person name="Botchan M.R."/>
            <person name="Bouck J."/>
            <person name="Brokstein P."/>
            <person name="Brottier P."/>
            <person name="Burtis K.C."/>
            <person name="Busam D.A."/>
            <person name="Butler H."/>
            <person name="Cadieu E."/>
            <person name="Center A."/>
            <person name="Chandra I."/>
            <person name="Cherry J.M."/>
            <person name="Cawley S."/>
            <person name="Dahlke C."/>
            <person name="Davenport L.B."/>
            <person name="Davies P."/>
            <person name="de Pablos B."/>
            <person name="Delcher A."/>
            <person name="Deng Z."/>
            <person name="Mays A.D."/>
            <person name="Dew I."/>
            <person name="Dietz S.M."/>
            <person name="Dodson K."/>
            <person name="Doup L.E."/>
            <person name="Downes M."/>
            <person name="Dugan-Rocha S."/>
            <person name="Dunkov B.C."/>
            <person name="Dunn P."/>
            <person name="Durbin K.J."/>
            <person name="Evangelista C.C."/>
            <person name="Ferraz C."/>
            <person name="Ferriera S."/>
            <person name="Fleischmann W."/>
            <person name="Fosler C."/>
            <person name="Gabrielian A.E."/>
            <person name="Garg N.S."/>
            <person name="Gelbart W.M."/>
            <person name="Glasser K."/>
            <person name="Glodek A."/>
            <person name="Gong F."/>
            <person name="Gorrell J.H."/>
            <person name="Gu Z."/>
            <person name="Guan P."/>
            <person name="Harris M."/>
            <person name="Harris N.L."/>
            <person name="Harvey D.A."/>
            <person name="Heiman T.J."/>
            <person name="Hernandez J.R."/>
            <person name="Houck J."/>
            <person name="Hostin D."/>
            <person name="Houston K.A."/>
            <person name="Howland T.J."/>
            <person name="Wei M.-H."/>
            <person name="Ibegwam C."/>
            <person name="Jalali M."/>
            <person name="Kalush F."/>
            <person name="Karpen G.H."/>
            <person name="Ke Z."/>
            <person name="Kennison J.A."/>
            <person name="Ketchum K.A."/>
            <person name="Kimmel B.E."/>
            <person name="Kodira C.D."/>
            <person name="Kraft C.L."/>
            <person name="Kravitz S."/>
            <person name="Kulp D."/>
            <person name="Lai Z."/>
            <person name="Lasko P."/>
            <person name="Lei Y."/>
            <person name="Levitsky A.A."/>
            <person name="Li J.H."/>
            <person name="Li Z."/>
            <person name="Liang Y."/>
            <person name="Lin X."/>
            <person name="Liu X."/>
            <person name="Mattei B."/>
            <person name="McIntosh T.C."/>
            <person name="McLeod M.P."/>
            <person name="McPherson D."/>
            <person name="Merkulov G."/>
            <person name="Milshina N.V."/>
            <person name="Mobarry C."/>
            <person name="Morris J."/>
            <person name="Moshrefi A."/>
            <person name="Mount S.M."/>
            <person name="Moy M."/>
            <person name="Murphy B."/>
            <person name="Murphy L."/>
            <person name="Muzny D.M."/>
            <person name="Nelson D.L."/>
            <person name="Nelson D.R."/>
            <person name="Nelson K.A."/>
            <person name="Nixon K."/>
            <person name="Nusskern D.R."/>
            <person name="Pacleb J.M."/>
            <person name="Palazzolo M."/>
            <person name="Pittman G.S."/>
            <person name="Pan S."/>
            <person name="Pollard J."/>
            <person name="Puri V."/>
            <person name="Reese M.G."/>
            <person name="Reinert K."/>
            <person name="Remington K."/>
            <person name="Saunders R.D.C."/>
            <person name="Scheeler F."/>
            <person name="Shen H."/>
            <person name="Shue B.C."/>
            <person name="Siden-Kiamos I."/>
            <person name="Simpson M."/>
            <person name="Skupski M.P."/>
            <person name="Smith T.J."/>
            <person name="Spier E."/>
            <person name="Spradling A.C."/>
            <person name="Stapleton M."/>
            <person name="Strong R."/>
            <person name="Sun E."/>
            <person name="Svirskas R."/>
            <person name="Tector C."/>
            <person name="Turner R."/>
            <person name="Venter E."/>
            <person name="Wang A.H."/>
            <person name="Wang X."/>
            <person name="Wang Z.-Y."/>
            <person name="Wassarman D.A."/>
            <person name="Weinstock G.M."/>
            <person name="Weissenbach J."/>
            <person name="Williams S.M."/>
            <person name="Woodage T."/>
            <person name="Worley K.C."/>
            <person name="Wu D."/>
            <person name="Yang S."/>
            <person name="Yao Q.A."/>
            <person name="Ye J."/>
            <person name="Yeh R.-F."/>
            <person name="Zaveri J.S."/>
            <person name="Zhan M."/>
            <person name="Zhang G."/>
            <person name="Zhao Q."/>
            <person name="Zheng L."/>
            <person name="Zheng X.H."/>
            <person name="Zhong F.N."/>
            <person name="Zhong W."/>
            <person name="Zhou X."/>
            <person name="Zhu S.C."/>
            <person name="Zhu X."/>
            <person name="Smith H.O."/>
            <person name="Gibbs R.A."/>
            <person name="Myers E.W."/>
            <person name="Rubin G.M."/>
            <person name="Venter J.C."/>
        </authorList>
    </citation>
    <scope>NUCLEOTIDE SEQUENCE [LARGE SCALE GENOMIC DNA]</scope>
    <source>
        <strain>Berkeley</strain>
    </source>
</reference>
<reference evidence="11" key="2">
    <citation type="journal article" date="2002" name="Genome Biol.">
        <title>Annotation of the Drosophila melanogaster euchromatic genome: a systematic review.</title>
        <authorList>
            <person name="Misra S."/>
            <person name="Crosby M.A."/>
            <person name="Mungall C.J."/>
            <person name="Matthews B.B."/>
            <person name="Campbell K.S."/>
            <person name="Hradecky P."/>
            <person name="Huang Y."/>
            <person name="Kaminker J.S."/>
            <person name="Millburn G.H."/>
            <person name="Prochnik S.E."/>
            <person name="Smith C.D."/>
            <person name="Tupy J.L."/>
            <person name="Whitfield E.J."/>
            <person name="Bayraktaroglu L."/>
            <person name="Berman B.P."/>
            <person name="Bettencourt B.R."/>
            <person name="Celniker S.E."/>
            <person name="de Grey A.D.N.J."/>
            <person name="Drysdale R.A."/>
            <person name="Harris N.L."/>
            <person name="Richter J."/>
            <person name="Russo S."/>
            <person name="Schroeder A.J."/>
            <person name="Shu S.Q."/>
            <person name="Stapleton M."/>
            <person name="Yamada C."/>
            <person name="Ashburner M."/>
            <person name="Gelbart W.M."/>
            <person name="Rubin G.M."/>
            <person name="Lewis S.E."/>
        </authorList>
    </citation>
    <scope>GENOME REANNOTATION</scope>
    <source>
        <strain>Berkeley</strain>
    </source>
</reference>
<reference evidence="13" key="3">
    <citation type="submission" date="2007-10" db="EMBL/GenBank/DDBJ databases">
        <authorList>
            <person name="Stapleton M."/>
            <person name="Carlson J."/>
            <person name="Frise E."/>
            <person name="Kapadia B."/>
            <person name="Park S."/>
            <person name="Wan K."/>
            <person name="Yu C."/>
            <person name="Celniker S."/>
        </authorList>
    </citation>
    <scope>NUCLEOTIDE SEQUENCE [LARGE SCALE MRNA]</scope>
    <source>
        <strain>Berkeley</strain>
    </source>
</reference>
<reference evidence="11" key="4">
    <citation type="journal article" date="2005" name="Oncogene">
        <title>Drosophila caliban, a nuclear export mediator, can function as a tumor suppressor in human lung cancer cells.</title>
        <authorList>
            <person name="Bi X."/>
            <person name="Jones T."/>
            <person name="Abbasi F."/>
            <person name="Lee H."/>
            <person name="Stultz B."/>
            <person name="Hursh D.A."/>
            <person name="Mortin M.A."/>
        </authorList>
    </citation>
    <scope>FUNCTION</scope>
    <scope>INTERACTION WITH PROS AND EMB</scope>
    <scope>DEVELOPMENTAL STAGE</scope>
    <scope>DOMAIN</scope>
    <scope>DISRUPTION PHENOTYPE</scope>
</reference>
<reference key="5">
    <citation type="journal article" date="2013" name="Oncogene">
        <title>The tumor suppressor Caliban regulates DNA damage-induced apoptosis through p53-dependent and -independent activity.</title>
        <authorList>
            <person name="Wang Y."/>
            <person name="Wang Z."/>
            <person name="Joshi B.H."/>
            <person name="Puri R.K."/>
            <person name="Stultz B."/>
            <person name="Yuan Q."/>
            <person name="Bai Y."/>
            <person name="Zhou P."/>
            <person name="Yuan Z."/>
            <person name="Hursh D.A."/>
            <person name="Bi X."/>
        </authorList>
    </citation>
    <scope>FUNCTION</scope>
    <scope>INDUCTION BY DNA DAMAGE</scope>
    <scope>DISRUPTION PHENOTYPE</scope>
</reference>
<reference key="6">
    <citation type="journal article" date="2018" name="Cell Cycle">
        <title>Drosophila Caliban mediates G1-S transition and ionizing radiation induced S phase checkpoint.</title>
        <authorList>
            <person name="Song F."/>
            <person name="Li D."/>
            <person name="Wang Y."/>
            <person name="Bi X."/>
        </authorList>
    </citation>
    <scope>FUNCTION</scope>
    <scope>INDUCTION BY DNA DAMAGE</scope>
    <scope>DISRUPTION PHENOTYPE</scope>
</reference>
<reference key="7">
    <citation type="journal article" date="2019" name="Mol. Cell">
        <title>MISTERMINATE Mechanistically Links Mitochondrial Dysfunction with Proteostasis Failure.</title>
        <authorList>
            <person name="Wu Z."/>
            <person name="Tantray I."/>
            <person name="Lim J."/>
            <person name="Chen S."/>
            <person name="Li Y."/>
            <person name="Davis Z."/>
            <person name="Sitron C."/>
            <person name="Dong J."/>
            <person name="Gispert S."/>
            <person name="Auburger G."/>
            <person name="Brandman O."/>
            <person name="Bi X."/>
            <person name="Snyder M."/>
            <person name="Lu B."/>
        </authorList>
    </citation>
    <scope>FUNCTION</scope>
    <scope>DISRUPTION PHENOTYPE</scope>
</reference>
<reference key="8">
    <citation type="journal article" date="2020" name="PLoS Genet.">
        <title>Drosophila Caliban preserves intestinal homeostasis and lifespan through regulating mitochondrial dynamics and redox state in enterocytes.</title>
        <authorList>
            <person name="Dai Z."/>
            <person name="Li D."/>
            <person name="Du X."/>
            <person name="Ge Y."/>
            <person name="Hursh D.A."/>
            <person name="Bi X."/>
        </authorList>
    </citation>
    <scope>FUNCTION</scope>
    <scope>SUBCELLULAR LOCATION</scope>
    <scope>TISSUE SPECIFICITY</scope>
    <scope>DISRUPTION PHENOTYPE</scope>
</reference>
<feature type="chain" id="PRO_0000408362" description="Ribosome quality control complex subunit NEMF homolog">
    <location>
        <begin position="1"/>
        <end position="992"/>
    </location>
</feature>
<feature type="region of interest" description="Disordered" evidence="4">
    <location>
        <begin position="214"/>
        <end position="245"/>
    </location>
</feature>
<feature type="region of interest" description="Disordered" evidence="4">
    <location>
        <begin position="688"/>
        <end position="715"/>
    </location>
</feature>
<feature type="region of interest" description="Disordered" evidence="4">
    <location>
        <begin position="771"/>
        <end position="895"/>
    </location>
</feature>
<feature type="coiled-coil region" evidence="3">
    <location>
        <begin position="331"/>
        <end position="370"/>
    </location>
</feature>
<feature type="coiled-coil region" evidence="3">
    <location>
        <begin position="481"/>
        <end position="514"/>
    </location>
</feature>
<feature type="coiled-coil region" evidence="3">
    <location>
        <begin position="774"/>
        <end position="839"/>
    </location>
</feature>
<feature type="compositionally biased region" description="Basic and acidic residues" evidence="4">
    <location>
        <begin position="214"/>
        <end position="231"/>
    </location>
</feature>
<feature type="compositionally biased region" description="Polar residues" evidence="4">
    <location>
        <begin position="702"/>
        <end position="715"/>
    </location>
</feature>
<feature type="compositionally biased region" description="Basic and acidic residues" evidence="4">
    <location>
        <begin position="782"/>
        <end position="796"/>
    </location>
</feature>
<feature type="compositionally biased region" description="Basic residues" evidence="4">
    <location>
        <begin position="814"/>
        <end position="825"/>
    </location>
</feature>
<feature type="compositionally biased region" description="Basic and acidic residues" evidence="4">
    <location>
        <begin position="845"/>
        <end position="874"/>
    </location>
</feature>
<evidence type="ECO:0000250" key="1">
    <source>
        <dbReference type="UniProtKB" id="O60524"/>
    </source>
</evidence>
<evidence type="ECO:0000250" key="2">
    <source>
        <dbReference type="UniProtKB" id="Q12532"/>
    </source>
</evidence>
<evidence type="ECO:0000255" key="3"/>
<evidence type="ECO:0000256" key="4">
    <source>
        <dbReference type="SAM" id="MobiDB-lite"/>
    </source>
</evidence>
<evidence type="ECO:0000269" key="5">
    <source>
    </source>
</evidence>
<evidence type="ECO:0000269" key="6">
    <source>
    </source>
</evidence>
<evidence type="ECO:0000269" key="7">
    <source>
    </source>
</evidence>
<evidence type="ECO:0000269" key="8">
    <source>
    </source>
</evidence>
<evidence type="ECO:0000269" key="9">
    <source>
    </source>
</evidence>
<evidence type="ECO:0000303" key="10">
    <source>
    </source>
</evidence>
<evidence type="ECO:0000305" key="11"/>
<evidence type="ECO:0000312" key="12">
    <source>
        <dbReference type="EMBL" id="AAF56406.2"/>
    </source>
</evidence>
<evidence type="ECO:0000312" key="13">
    <source>
        <dbReference type="EMBL" id="ABV82224.1"/>
    </source>
</evidence>
<evidence type="ECO:0000312" key="14">
    <source>
        <dbReference type="FlyBase" id="FBgn0259152"/>
    </source>
</evidence>
<protein>
    <recommendedName>
        <fullName evidence="11">Ribosome quality control complex subunit NEMF homolog</fullName>
    </recommendedName>
    <alternativeName>
        <fullName evidence="10">Protein Caliban</fullName>
    </alternativeName>
</protein>
<gene>
    <name evidence="10 14" type="primary">Clbn</name>
    <name evidence="14" type="ORF">CG11847</name>
</gene>
<accession>Q9VBX1</accession>
<accession>A8E6Q0</accession>
<sequence>MKTRFNTFDIICGVAELQKLVGWRVNQIYDVDNKTYLFRMQGTGAVEKVTLLIESGTRFHTTRFEWPKNMAPSGFSMKLRKHLKNKRLEKVQQMGSDRIVDFQFGTGDAAYHVILELYDRGNVILTDYELTTLYILRPHTEGENLRFAMREKYPVERAKQPTKELELEALVKLLENARNGDYLRQILTPNLDCGPAVIEHVLLSHGLDNHVIKKETTEETPEAEDKPEKGGKKQRKKQQNTKLEQKPFDMVNDLPILQQAVKDAQELIAEGNSGKSKGYIIQVKEEKPTENGTVEFFFRNIEFHPYLFIQFKNFEKATFESFMEAVDEFYSTQESQKIDMKTLQQEREALKKLSNVKNDHAKRLEELTKVQDVDRKKAELITSNQSLVDNAIRAVQSAIASQLSWPDIHELVKEAQANGDAVASSIKQLKLETNHISLMLSDPYDNDEDDDLKDPEVTVVDVDLALSAWANARRYYDMKRSAAQKEKKTVDASQKALKSAERKTQQTLKEVRTISNIVKARKVFWFEKFYWFISSENYLVIGGRDAQQNELIVKRYMRPKDIYVHAEIQGASSVIIQNPTGEEIPPKTLLEAGSMAISYSVAWDAKVVTNSYWVTSDQVSKTAPTGEYLATGSFMIRGKKNFLPSCHLTMGLSLLFKLEDSFIERHLGERKVRSLEDDQIDPNVKENEVEHDLLSDNEDADSNINLSEPSSNTEITAFPNTEVKIEHDTGRIIVRSDSVNPEIEETKESEVVLDKILKKTDDEETTIILAGPSRKKQVSAKKTKEDKARAKQEAAKQEVPPVSSEPKNPSQVKRGQKGKLKKMKQKYKDQDDEEREIRMMILKSSGKEKPQASADKVVEKSESTKEYVKPEKSAAPKNPVELDDADEVPVGGDVDVLNSLTGQPHEGDELLFAIPVVAPYQALQNYKFKVKLTPGTGKRGKAAKLALNIFAKEKSCSAREKDLLKSIKEESLARNIPGKVKLSAPQLQKYHK</sequence>
<dbReference type="EMBL" id="AE014297">
    <property type="protein sequence ID" value="AAF56406.2"/>
    <property type="molecule type" value="Genomic_DNA"/>
</dbReference>
<dbReference type="EMBL" id="AE014297">
    <property type="protein sequence ID" value="ACZ95015.1"/>
    <property type="molecule type" value="Genomic_DNA"/>
</dbReference>
<dbReference type="EMBL" id="BT030842">
    <property type="protein sequence ID" value="ABV82224.1"/>
    <property type="molecule type" value="mRNA"/>
</dbReference>
<dbReference type="RefSeq" id="NP_001163721.1">
    <property type="nucleotide sequence ID" value="NM_001170250.1"/>
</dbReference>
<dbReference type="RefSeq" id="NP_651341.2">
    <property type="nucleotide sequence ID" value="NM_143084.2"/>
</dbReference>
<dbReference type="SMR" id="Q9VBX1"/>
<dbReference type="BioGRID" id="67938">
    <property type="interactions" value="11"/>
</dbReference>
<dbReference type="FunCoup" id="Q9VBX1">
    <property type="interactions" value="1749"/>
</dbReference>
<dbReference type="IntAct" id="Q9VBX1">
    <property type="interactions" value="8"/>
</dbReference>
<dbReference type="STRING" id="7227.FBpp0290492"/>
<dbReference type="PaxDb" id="7227-FBpp0290493"/>
<dbReference type="DNASU" id="43018"/>
<dbReference type="EnsemblMetazoa" id="FBtr0301277">
    <property type="protein sequence ID" value="FBpp0290492"/>
    <property type="gene ID" value="FBgn0259152"/>
</dbReference>
<dbReference type="EnsemblMetazoa" id="FBtr0301278">
    <property type="protein sequence ID" value="FBpp0290493"/>
    <property type="gene ID" value="FBgn0259152"/>
</dbReference>
<dbReference type="GeneID" id="43018"/>
<dbReference type="KEGG" id="dme:Dmel_CG11847"/>
<dbReference type="UCSC" id="CG11847-RA">
    <property type="organism name" value="d. melanogaster"/>
</dbReference>
<dbReference type="AGR" id="FB:FBgn0259152"/>
<dbReference type="CTD" id="43018"/>
<dbReference type="FlyBase" id="FBgn0259152">
    <property type="gene designation" value="Clbn"/>
</dbReference>
<dbReference type="VEuPathDB" id="VectorBase:FBgn0259152"/>
<dbReference type="eggNOG" id="KOG2030">
    <property type="taxonomic scope" value="Eukaryota"/>
</dbReference>
<dbReference type="GeneTree" id="ENSGT00390000018516"/>
<dbReference type="HOGENOM" id="CLU_003612_1_0_1"/>
<dbReference type="InParanoid" id="Q9VBX1"/>
<dbReference type="OMA" id="MFLEFFA"/>
<dbReference type="OrthoDB" id="207084at2759"/>
<dbReference type="PhylomeDB" id="Q9VBX1"/>
<dbReference type="SignaLink" id="Q9VBX1"/>
<dbReference type="BioGRID-ORCS" id="43018">
    <property type="hits" value="0 hits in 1 CRISPR screen"/>
</dbReference>
<dbReference type="GenomeRNAi" id="43018"/>
<dbReference type="PRO" id="PR:Q9VBX1"/>
<dbReference type="Proteomes" id="UP000000803">
    <property type="component" value="Chromosome 3R"/>
</dbReference>
<dbReference type="Bgee" id="FBgn0259152">
    <property type="expression patterns" value="Expressed in eye disc (Drosophila) and 138 other cell types or tissues"/>
</dbReference>
<dbReference type="ExpressionAtlas" id="Q9VBX1">
    <property type="expression patterns" value="baseline and differential"/>
</dbReference>
<dbReference type="GO" id="GO:0032473">
    <property type="term" value="C:cytoplasmic side of mitochondrial outer membrane"/>
    <property type="evidence" value="ECO:0000314"/>
    <property type="project" value="UniProtKB"/>
</dbReference>
<dbReference type="GO" id="GO:0005634">
    <property type="term" value="C:nucleus"/>
    <property type="evidence" value="ECO:0007669"/>
    <property type="project" value="UniProtKB-SubCell"/>
</dbReference>
<dbReference type="GO" id="GO:1990112">
    <property type="term" value="C:RQC complex"/>
    <property type="evidence" value="ECO:0000318"/>
    <property type="project" value="GO_Central"/>
</dbReference>
<dbReference type="GO" id="GO:0043023">
    <property type="term" value="F:ribosomal large subunit binding"/>
    <property type="evidence" value="ECO:0000318"/>
    <property type="project" value="GO_Central"/>
</dbReference>
<dbReference type="GO" id="GO:0000049">
    <property type="term" value="F:tRNA binding"/>
    <property type="evidence" value="ECO:0000314"/>
    <property type="project" value="UniProtKB"/>
</dbReference>
<dbReference type="GO" id="GO:0140708">
    <property type="term" value="P:CAT tailing"/>
    <property type="evidence" value="ECO:0000250"/>
    <property type="project" value="UniProtKB"/>
</dbReference>
<dbReference type="GO" id="GO:1902231">
    <property type="term" value="P:positive regulation of intrinsic apoptotic signaling pathway in response to DNA damage"/>
    <property type="evidence" value="ECO:0000315"/>
    <property type="project" value="FlyBase"/>
</dbReference>
<dbReference type="GO" id="GO:1902167">
    <property type="term" value="P:positive regulation of intrinsic apoptotic signaling pathway in response to DNA damage by p53 class mediator"/>
    <property type="evidence" value="ECO:0000315"/>
    <property type="project" value="FlyBase"/>
</dbReference>
<dbReference type="GO" id="GO:0006611">
    <property type="term" value="P:protein export from nucleus"/>
    <property type="evidence" value="ECO:0000315"/>
    <property type="project" value="FlyBase"/>
</dbReference>
<dbReference type="GO" id="GO:0072344">
    <property type="term" value="P:rescue of stalled ribosome"/>
    <property type="evidence" value="ECO:0000314"/>
    <property type="project" value="UniProtKB"/>
</dbReference>
<dbReference type="GO" id="GO:1990116">
    <property type="term" value="P:ribosome-associated ubiquitin-dependent protein catabolic process"/>
    <property type="evidence" value="ECO:0000318"/>
    <property type="project" value="GO_Central"/>
</dbReference>
<dbReference type="FunFam" id="2.30.310.10:FF:000001">
    <property type="entry name" value="Nuclear export mediator factor Nemf"/>
    <property type="match status" value="1"/>
</dbReference>
<dbReference type="Gene3D" id="2.30.310.10">
    <property type="entry name" value="ibrinogen binding protein from staphylococcus aureus domain"/>
    <property type="match status" value="1"/>
</dbReference>
<dbReference type="InterPro" id="IPR021846">
    <property type="entry name" value="NFACT-C"/>
</dbReference>
<dbReference type="InterPro" id="IPR008532">
    <property type="entry name" value="NFACT_RNA-bd"/>
</dbReference>
<dbReference type="InterPro" id="IPR051608">
    <property type="entry name" value="RQC_Subunit_NEMF"/>
</dbReference>
<dbReference type="NCBIfam" id="NF041120">
    <property type="entry name" value="RqcH_arch"/>
    <property type="match status" value="1"/>
</dbReference>
<dbReference type="PANTHER" id="PTHR15239">
    <property type="entry name" value="NUCLEAR EXPORT MEDIATOR FACTOR NEMF"/>
    <property type="match status" value="1"/>
</dbReference>
<dbReference type="PANTHER" id="PTHR15239:SF6">
    <property type="entry name" value="RIBOSOME QUALITY CONTROL COMPLEX SUBUNIT NEMF"/>
    <property type="match status" value="1"/>
</dbReference>
<dbReference type="Pfam" id="PF11923">
    <property type="entry name" value="NFACT-C"/>
    <property type="match status" value="1"/>
</dbReference>
<dbReference type="Pfam" id="PF05670">
    <property type="entry name" value="NFACT-R_1"/>
    <property type="match status" value="1"/>
</dbReference>
<dbReference type="Pfam" id="PF05833">
    <property type="entry name" value="NFACT_N"/>
    <property type="match status" value="1"/>
</dbReference>